<feature type="chain" id="PRO_0000166269" description="Glycine cleavage system H protein">
    <location>
        <begin position="1"/>
        <end position="131"/>
    </location>
</feature>
<feature type="domain" description="Lipoyl-binding" evidence="2">
    <location>
        <begin position="24"/>
        <end position="106"/>
    </location>
</feature>
<feature type="modified residue" description="N6-lipoyllysine" evidence="1">
    <location>
        <position position="65"/>
    </location>
</feature>
<gene>
    <name evidence="1" type="primary">gcvH</name>
    <name type="ordered locus">XF_0181</name>
</gene>
<sequence length="131" mass="14421">MSDIPGDLKFLKSHEWVRIEDNNRAIVGISDHAQNLLGDLVYVELPNIGDHLDAGTTAAVIESVKAASDIYSPVTGKVIEVNTTLSDKPETINEDPYGEGWIMVIEMQAPEEISDLLSPDDYTKVLESDEH</sequence>
<reference key="1">
    <citation type="journal article" date="2000" name="Nature">
        <title>The genome sequence of the plant pathogen Xylella fastidiosa.</title>
        <authorList>
            <person name="Simpson A.J.G."/>
            <person name="Reinach F.C."/>
            <person name="Arruda P."/>
            <person name="Abreu F.A."/>
            <person name="Acencio M."/>
            <person name="Alvarenga R."/>
            <person name="Alves L.M.C."/>
            <person name="Araya J.E."/>
            <person name="Baia G.S."/>
            <person name="Baptista C.S."/>
            <person name="Barros M.H."/>
            <person name="Bonaccorsi E.D."/>
            <person name="Bordin S."/>
            <person name="Bove J.M."/>
            <person name="Briones M.R.S."/>
            <person name="Bueno M.R.P."/>
            <person name="Camargo A.A."/>
            <person name="Camargo L.E.A."/>
            <person name="Carraro D.M."/>
            <person name="Carrer H."/>
            <person name="Colauto N.B."/>
            <person name="Colombo C."/>
            <person name="Costa F.F."/>
            <person name="Costa M.C.R."/>
            <person name="Costa-Neto C.M."/>
            <person name="Coutinho L.L."/>
            <person name="Cristofani M."/>
            <person name="Dias-Neto E."/>
            <person name="Docena C."/>
            <person name="El-Dorry H."/>
            <person name="Facincani A.P."/>
            <person name="Ferreira A.J.S."/>
            <person name="Ferreira V.C.A."/>
            <person name="Ferro J.A."/>
            <person name="Fraga J.S."/>
            <person name="Franca S.C."/>
            <person name="Franco M.C."/>
            <person name="Frohme M."/>
            <person name="Furlan L.R."/>
            <person name="Garnier M."/>
            <person name="Goldman G.H."/>
            <person name="Goldman M.H.S."/>
            <person name="Gomes S.L."/>
            <person name="Gruber A."/>
            <person name="Ho P.L."/>
            <person name="Hoheisel J.D."/>
            <person name="Junqueira M.L."/>
            <person name="Kemper E.L."/>
            <person name="Kitajima J.P."/>
            <person name="Krieger J.E."/>
            <person name="Kuramae E.E."/>
            <person name="Laigret F."/>
            <person name="Lambais M.R."/>
            <person name="Leite L.C.C."/>
            <person name="Lemos E.G.M."/>
            <person name="Lemos M.V.F."/>
            <person name="Lopes S.A."/>
            <person name="Lopes C.R."/>
            <person name="Machado J.A."/>
            <person name="Machado M.A."/>
            <person name="Madeira A.M.B.N."/>
            <person name="Madeira H.M.F."/>
            <person name="Marino C.L."/>
            <person name="Marques M.V."/>
            <person name="Martins E.A.L."/>
            <person name="Martins E.M.F."/>
            <person name="Matsukuma A.Y."/>
            <person name="Menck C.F.M."/>
            <person name="Miracca E.C."/>
            <person name="Miyaki C.Y."/>
            <person name="Monteiro-Vitorello C.B."/>
            <person name="Moon D.H."/>
            <person name="Nagai M.A."/>
            <person name="Nascimento A.L.T.O."/>
            <person name="Netto L.E.S."/>
            <person name="Nhani A. Jr."/>
            <person name="Nobrega F.G."/>
            <person name="Nunes L.R."/>
            <person name="Oliveira M.A."/>
            <person name="de Oliveira M.C."/>
            <person name="de Oliveira R.C."/>
            <person name="Palmieri D.A."/>
            <person name="Paris A."/>
            <person name="Peixoto B.R."/>
            <person name="Pereira G.A.G."/>
            <person name="Pereira H.A. Jr."/>
            <person name="Pesquero J.B."/>
            <person name="Quaggio R.B."/>
            <person name="Roberto P.G."/>
            <person name="Rodrigues V."/>
            <person name="de Rosa A.J.M."/>
            <person name="de Rosa V.E. Jr."/>
            <person name="de Sa R.G."/>
            <person name="Santelli R.V."/>
            <person name="Sawasaki H.E."/>
            <person name="da Silva A.C.R."/>
            <person name="da Silva A.M."/>
            <person name="da Silva F.R."/>
            <person name="Silva W.A. Jr."/>
            <person name="da Silveira J.F."/>
            <person name="Silvestri M.L.Z."/>
            <person name="Siqueira W.J."/>
            <person name="de Souza A.A."/>
            <person name="de Souza A.P."/>
            <person name="Terenzi M.F."/>
            <person name="Truffi D."/>
            <person name="Tsai S.M."/>
            <person name="Tsuhako M.H."/>
            <person name="Vallada H."/>
            <person name="Van Sluys M.A."/>
            <person name="Verjovski-Almeida S."/>
            <person name="Vettore A.L."/>
            <person name="Zago M.A."/>
            <person name="Zatz M."/>
            <person name="Meidanis J."/>
            <person name="Setubal J.C."/>
        </authorList>
    </citation>
    <scope>NUCLEOTIDE SEQUENCE [LARGE SCALE GENOMIC DNA]</scope>
    <source>
        <strain>9a5c</strain>
    </source>
</reference>
<keyword id="KW-0450">Lipoyl</keyword>
<proteinExistence type="inferred from homology"/>
<name>GCSH_XYLFA</name>
<comment type="function">
    <text evidence="1">The glycine cleavage system catalyzes the degradation of glycine. The H protein shuttles the methylamine group of glycine from the P protein to the T protein.</text>
</comment>
<comment type="cofactor">
    <cofactor evidence="1">
        <name>(R)-lipoate</name>
        <dbReference type="ChEBI" id="CHEBI:83088"/>
    </cofactor>
    <text evidence="1">Binds 1 lipoyl cofactor covalently.</text>
</comment>
<comment type="subunit">
    <text evidence="1">The glycine cleavage system is composed of four proteins: P, T, L and H.</text>
</comment>
<comment type="similarity">
    <text evidence="1">Belongs to the GcvH family.</text>
</comment>
<comment type="sequence caution" evidence="3">
    <conflict type="erroneous initiation">
        <sequence resource="EMBL-CDS" id="AAF82994"/>
    </conflict>
</comment>
<accession>Q9PGW7</accession>
<protein>
    <recommendedName>
        <fullName evidence="1">Glycine cleavage system H protein</fullName>
    </recommendedName>
</protein>
<evidence type="ECO:0000255" key="1">
    <source>
        <dbReference type="HAMAP-Rule" id="MF_00272"/>
    </source>
</evidence>
<evidence type="ECO:0000255" key="2">
    <source>
        <dbReference type="PROSITE-ProRule" id="PRU01066"/>
    </source>
</evidence>
<evidence type="ECO:0000305" key="3"/>
<organism>
    <name type="scientific">Xylella fastidiosa (strain 9a5c)</name>
    <dbReference type="NCBI Taxonomy" id="160492"/>
    <lineage>
        <taxon>Bacteria</taxon>
        <taxon>Pseudomonadati</taxon>
        <taxon>Pseudomonadota</taxon>
        <taxon>Gammaproteobacteria</taxon>
        <taxon>Lysobacterales</taxon>
        <taxon>Lysobacteraceae</taxon>
        <taxon>Xylella</taxon>
    </lineage>
</organism>
<dbReference type="EMBL" id="AE003849">
    <property type="protein sequence ID" value="AAF82994.1"/>
    <property type="status" value="ALT_INIT"/>
    <property type="molecule type" value="Genomic_DNA"/>
</dbReference>
<dbReference type="PIR" id="E82837">
    <property type="entry name" value="E82837"/>
</dbReference>
<dbReference type="RefSeq" id="WP_010892724.1">
    <property type="nucleotide sequence ID" value="NC_002488.3"/>
</dbReference>
<dbReference type="SMR" id="Q9PGW7"/>
<dbReference type="STRING" id="160492.XF_0181"/>
<dbReference type="KEGG" id="xfa:XF_0181"/>
<dbReference type="eggNOG" id="COG0509">
    <property type="taxonomic scope" value="Bacteria"/>
</dbReference>
<dbReference type="HOGENOM" id="CLU_097408_2_2_6"/>
<dbReference type="Proteomes" id="UP000000812">
    <property type="component" value="Chromosome"/>
</dbReference>
<dbReference type="GO" id="GO:0005829">
    <property type="term" value="C:cytosol"/>
    <property type="evidence" value="ECO:0007669"/>
    <property type="project" value="TreeGrafter"/>
</dbReference>
<dbReference type="GO" id="GO:0005960">
    <property type="term" value="C:glycine cleavage complex"/>
    <property type="evidence" value="ECO:0007669"/>
    <property type="project" value="InterPro"/>
</dbReference>
<dbReference type="GO" id="GO:0019464">
    <property type="term" value="P:glycine decarboxylation via glycine cleavage system"/>
    <property type="evidence" value="ECO:0007669"/>
    <property type="project" value="UniProtKB-UniRule"/>
</dbReference>
<dbReference type="CDD" id="cd06848">
    <property type="entry name" value="GCS_H"/>
    <property type="match status" value="1"/>
</dbReference>
<dbReference type="Gene3D" id="2.40.50.100">
    <property type="match status" value="1"/>
</dbReference>
<dbReference type="HAMAP" id="MF_00272">
    <property type="entry name" value="GcvH"/>
    <property type="match status" value="1"/>
</dbReference>
<dbReference type="InterPro" id="IPR003016">
    <property type="entry name" value="2-oxoA_DH_lipoyl-BS"/>
</dbReference>
<dbReference type="InterPro" id="IPR000089">
    <property type="entry name" value="Biotin_lipoyl"/>
</dbReference>
<dbReference type="InterPro" id="IPR002930">
    <property type="entry name" value="GCV_H"/>
</dbReference>
<dbReference type="InterPro" id="IPR033753">
    <property type="entry name" value="GCV_H/Fam206"/>
</dbReference>
<dbReference type="InterPro" id="IPR017453">
    <property type="entry name" value="GCV_H_sub"/>
</dbReference>
<dbReference type="InterPro" id="IPR011053">
    <property type="entry name" value="Single_hybrid_motif"/>
</dbReference>
<dbReference type="NCBIfam" id="TIGR00527">
    <property type="entry name" value="gcvH"/>
    <property type="match status" value="1"/>
</dbReference>
<dbReference type="NCBIfam" id="NF002270">
    <property type="entry name" value="PRK01202.1"/>
    <property type="match status" value="1"/>
</dbReference>
<dbReference type="PANTHER" id="PTHR11715">
    <property type="entry name" value="GLYCINE CLEAVAGE SYSTEM H PROTEIN"/>
    <property type="match status" value="1"/>
</dbReference>
<dbReference type="PANTHER" id="PTHR11715:SF3">
    <property type="entry name" value="GLYCINE CLEAVAGE SYSTEM H PROTEIN-RELATED"/>
    <property type="match status" value="1"/>
</dbReference>
<dbReference type="Pfam" id="PF01597">
    <property type="entry name" value="GCV_H"/>
    <property type="match status" value="1"/>
</dbReference>
<dbReference type="SUPFAM" id="SSF51230">
    <property type="entry name" value="Single hybrid motif"/>
    <property type="match status" value="1"/>
</dbReference>
<dbReference type="PROSITE" id="PS50968">
    <property type="entry name" value="BIOTINYL_LIPOYL"/>
    <property type="match status" value="1"/>
</dbReference>
<dbReference type="PROSITE" id="PS00189">
    <property type="entry name" value="LIPOYL"/>
    <property type="match status" value="1"/>
</dbReference>